<accession>Q8BUB6</accession>
<accession>B2RR02</accession>
<comment type="function">
    <text evidence="2">Sulfotransferase that catalyzes the transfer of sulfate to the position 2 of uronyl residues in glycosaminoglycan chains. Has mainly activity toward iduronyl residues in dermatan sulfate, and weaker activity toward glucuronyl residues of chondroitin sulfate. Has no activity toward desulfated N-resulfated heparin.</text>
</comment>
<comment type="subcellular location">
    <subcellularLocation>
        <location evidence="1">Golgi apparatus membrane</location>
        <topology evidence="1">Single-pass type II membrane protein</topology>
    </subcellularLocation>
</comment>
<comment type="similarity">
    <text evidence="5">Belongs to the sulfotransferase 3 family.</text>
</comment>
<comment type="sequence caution" evidence="5">
    <conflict type="frameshift">
        <sequence resource="EMBL-CDS" id="BAC39625"/>
    </conflict>
</comment>
<proteinExistence type="evidence at transcript level"/>
<name>UST_MOUSE</name>
<dbReference type="EC" id="2.8.2.-" evidence="2"/>
<dbReference type="EMBL" id="AK086181">
    <property type="protein sequence ID" value="BAC39625.1"/>
    <property type="status" value="ALT_FRAME"/>
    <property type="molecule type" value="mRNA"/>
</dbReference>
<dbReference type="EMBL" id="BC138155">
    <property type="protein sequence ID" value="AAI38156.1"/>
    <property type="molecule type" value="mRNA"/>
</dbReference>
<dbReference type="CCDS" id="CCDS35835.1"/>
<dbReference type="RefSeq" id="NP_796361.2">
    <property type="nucleotide sequence ID" value="NM_177387.3"/>
</dbReference>
<dbReference type="SMR" id="Q8BUB6"/>
<dbReference type="FunCoup" id="Q8BUB6">
    <property type="interactions" value="237"/>
</dbReference>
<dbReference type="STRING" id="10090.ENSMUSP00000052017"/>
<dbReference type="GlyCosmos" id="Q8BUB6">
    <property type="glycosylation" value="5 sites, No reported glycans"/>
</dbReference>
<dbReference type="GlyGen" id="Q8BUB6">
    <property type="glycosylation" value="5 sites, 5 N-linked glycans (5 sites)"/>
</dbReference>
<dbReference type="PhosphoSitePlus" id="Q8BUB6"/>
<dbReference type="SwissPalm" id="Q8BUB6"/>
<dbReference type="PaxDb" id="10090-ENSMUSP00000052017"/>
<dbReference type="ProteomicsDB" id="297902"/>
<dbReference type="Pumba" id="Q8BUB6"/>
<dbReference type="Antibodypedia" id="33260">
    <property type="antibodies" value="163 antibodies from 18 providers"/>
</dbReference>
<dbReference type="DNASU" id="338362"/>
<dbReference type="Ensembl" id="ENSMUST00000061601.9">
    <property type="protein sequence ID" value="ENSMUSP00000052017.8"/>
    <property type="gene ID" value="ENSMUSG00000047712.9"/>
</dbReference>
<dbReference type="GeneID" id="338362"/>
<dbReference type="KEGG" id="mmu:338362"/>
<dbReference type="UCSC" id="uc007eit.1">
    <property type="organism name" value="mouse"/>
</dbReference>
<dbReference type="AGR" id="MGI:2442406"/>
<dbReference type="CTD" id="10090"/>
<dbReference type="MGI" id="MGI:2442406">
    <property type="gene designation" value="Ust"/>
</dbReference>
<dbReference type="VEuPathDB" id="HostDB:ENSMUSG00000047712"/>
<dbReference type="eggNOG" id="KOG3922">
    <property type="taxonomic scope" value="Eukaryota"/>
</dbReference>
<dbReference type="GeneTree" id="ENSGT00530000063408"/>
<dbReference type="HOGENOM" id="CLU_056190_0_0_1"/>
<dbReference type="InParanoid" id="Q8BUB6"/>
<dbReference type="OMA" id="PMPIYVN"/>
<dbReference type="OrthoDB" id="10019582at2759"/>
<dbReference type="PhylomeDB" id="Q8BUB6"/>
<dbReference type="TreeFam" id="TF315238"/>
<dbReference type="Reactome" id="R-MMU-2022923">
    <property type="pathway name" value="Dermatan sulfate biosynthesis"/>
</dbReference>
<dbReference type="BioGRID-ORCS" id="338362">
    <property type="hits" value="5 hits in 78 CRISPR screens"/>
</dbReference>
<dbReference type="ChiTaRS" id="Ust">
    <property type="organism name" value="mouse"/>
</dbReference>
<dbReference type="PRO" id="PR:Q8BUB6"/>
<dbReference type="Proteomes" id="UP000000589">
    <property type="component" value="Chromosome 10"/>
</dbReference>
<dbReference type="RNAct" id="Q8BUB6">
    <property type="molecule type" value="protein"/>
</dbReference>
<dbReference type="Bgee" id="ENSMUSG00000047712">
    <property type="expression patterns" value="Expressed in dentate gyrus of hippocampal formation granule cell and 168 other cell types or tissues"/>
</dbReference>
<dbReference type="GO" id="GO:0000139">
    <property type="term" value="C:Golgi membrane"/>
    <property type="evidence" value="ECO:0007669"/>
    <property type="project" value="UniProtKB-SubCell"/>
</dbReference>
<dbReference type="GO" id="GO:0050656">
    <property type="term" value="F:3'-phosphoadenosine 5'-phosphosulfate binding"/>
    <property type="evidence" value="ECO:0000250"/>
    <property type="project" value="UniProtKB"/>
</dbReference>
<dbReference type="GO" id="GO:0034482">
    <property type="term" value="F:chondroitin 2-sulfotransferase activity"/>
    <property type="evidence" value="ECO:0000250"/>
    <property type="project" value="UniProtKB"/>
</dbReference>
<dbReference type="GO" id="GO:0102142">
    <property type="term" value="F:dermatan 2-sulfotransferase activity"/>
    <property type="evidence" value="ECO:0007669"/>
    <property type="project" value="Ensembl"/>
</dbReference>
<dbReference type="GO" id="GO:0050651">
    <property type="term" value="P:dermatan sulfate proteoglycan biosynthetic process"/>
    <property type="evidence" value="ECO:0007669"/>
    <property type="project" value="Ensembl"/>
</dbReference>
<dbReference type="GO" id="GO:0030010">
    <property type="term" value="P:establishment of cell polarity"/>
    <property type="evidence" value="ECO:0000315"/>
    <property type="project" value="MGI"/>
</dbReference>
<dbReference type="GO" id="GO:0050770">
    <property type="term" value="P:regulation of axonogenesis"/>
    <property type="evidence" value="ECO:0000315"/>
    <property type="project" value="MGI"/>
</dbReference>
<dbReference type="FunFam" id="3.40.50.300:FF:000580">
    <property type="entry name" value="uronyl 2-sulfotransferase"/>
    <property type="match status" value="1"/>
</dbReference>
<dbReference type="Gene3D" id="3.40.50.300">
    <property type="entry name" value="P-loop containing nucleotide triphosphate hydrolases"/>
    <property type="match status" value="1"/>
</dbReference>
<dbReference type="InterPro" id="IPR007734">
    <property type="entry name" value="Heparan_SO4_2-O-STrfase"/>
</dbReference>
<dbReference type="InterPro" id="IPR027417">
    <property type="entry name" value="P-loop_NTPase"/>
</dbReference>
<dbReference type="InterPro" id="IPR005331">
    <property type="entry name" value="Sulfotransferase"/>
</dbReference>
<dbReference type="PANTHER" id="PTHR12129">
    <property type="entry name" value="HEPARAN SULFATE 2-O-SULFOTRANSFERASE"/>
    <property type="match status" value="1"/>
</dbReference>
<dbReference type="PANTHER" id="PTHR12129:SF15">
    <property type="entry name" value="URONYL 2-SULFOTRANSFERASE"/>
    <property type="match status" value="1"/>
</dbReference>
<dbReference type="Pfam" id="PF03567">
    <property type="entry name" value="Sulfotransfer_2"/>
    <property type="match status" value="1"/>
</dbReference>
<dbReference type="SUPFAM" id="SSF52540">
    <property type="entry name" value="P-loop containing nucleoside triphosphate hydrolases"/>
    <property type="match status" value="1"/>
</dbReference>
<protein>
    <recommendedName>
        <fullName evidence="6">Uronyl 2-sulfotransferase</fullName>
        <ecNumber evidence="2">2.8.2.-</ecNumber>
    </recommendedName>
</protein>
<organism evidence="7">
    <name type="scientific">Mus musculus</name>
    <name type="common">Mouse</name>
    <dbReference type="NCBI Taxonomy" id="10090"/>
    <lineage>
        <taxon>Eukaryota</taxon>
        <taxon>Metazoa</taxon>
        <taxon>Chordata</taxon>
        <taxon>Craniata</taxon>
        <taxon>Vertebrata</taxon>
        <taxon>Euteleostomi</taxon>
        <taxon>Mammalia</taxon>
        <taxon>Eutheria</taxon>
        <taxon>Euarchontoglires</taxon>
        <taxon>Glires</taxon>
        <taxon>Rodentia</taxon>
        <taxon>Myomorpha</taxon>
        <taxon>Muroidea</taxon>
        <taxon>Muridae</taxon>
        <taxon>Murinae</taxon>
        <taxon>Mus</taxon>
        <taxon>Mus</taxon>
    </lineage>
</organism>
<sequence>MKKKQQQHPGGGTDPWPHGAPVGGAPPCLGSCKRRIPLLPFLRFSLRDYGFCMATLLVFCLGSLFYQLSGGPPRFLLDLRQYLGNSTYLDDHGPPPSKVLPFPSQVVYNRVGKCGSRTVVLLLRILSEKHGFNLVTSDIHNKTRLTKNEQMELIKNISTAEQPYLFTRHVHFLNFSRFGGDQPVYINIIRDPVSRFLSNYFFRRFGDWRGEQNHMIRTPSMRQEERYLDINECILENYPECSNPRLFYIIPYFCGQHPRCREPGEWALERAKLNVNENFLLVGILEELEDVLLLLERFLPHYFKGVLSIYKDPEHRKLGNMTVTVRKTVPSPEAVQILYQRMRYEYEFYHYVREQFHLLKRKLGLKSRVSGPPVRPQFFIPTPLETEEPIDDEEQDDEKWLEDIYKR</sequence>
<gene>
    <name evidence="6" type="primary">Ust</name>
</gene>
<reference key="1">
    <citation type="journal article" date="2005" name="Science">
        <title>The transcriptional landscape of the mammalian genome.</title>
        <authorList>
            <person name="Carninci P."/>
            <person name="Kasukawa T."/>
            <person name="Katayama S."/>
            <person name="Gough J."/>
            <person name="Frith M.C."/>
            <person name="Maeda N."/>
            <person name="Oyama R."/>
            <person name="Ravasi T."/>
            <person name="Lenhard B."/>
            <person name="Wells C."/>
            <person name="Kodzius R."/>
            <person name="Shimokawa K."/>
            <person name="Bajic V.B."/>
            <person name="Brenner S.E."/>
            <person name="Batalov S."/>
            <person name="Forrest A.R."/>
            <person name="Zavolan M."/>
            <person name="Davis M.J."/>
            <person name="Wilming L.G."/>
            <person name="Aidinis V."/>
            <person name="Allen J.E."/>
            <person name="Ambesi-Impiombato A."/>
            <person name="Apweiler R."/>
            <person name="Aturaliya R.N."/>
            <person name="Bailey T.L."/>
            <person name="Bansal M."/>
            <person name="Baxter L."/>
            <person name="Beisel K.W."/>
            <person name="Bersano T."/>
            <person name="Bono H."/>
            <person name="Chalk A.M."/>
            <person name="Chiu K.P."/>
            <person name="Choudhary V."/>
            <person name="Christoffels A."/>
            <person name="Clutterbuck D.R."/>
            <person name="Crowe M.L."/>
            <person name="Dalla E."/>
            <person name="Dalrymple B.P."/>
            <person name="de Bono B."/>
            <person name="Della Gatta G."/>
            <person name="di Bernardo D."/>
            <person name="Down T."/>
            <person name="Engstrom P."/>
            <person name="Fagiolini M."/>
            <person name="Faulkner G."/>
            <person name="Fletcher C.F."/>
            <person name="Fukushima T."/>
            <person name="Furuno M."/>
            <person name="Futaki S."/>
            <person name="Gariboldi M."/>
            <person name="Georgii-Hemming P."/>
            <person name="Gingeras T.R."/>
            <person name="Gojobori T."/>
            <person name="Green R.E."/>
            <person name="Gustincich S."/>
            <person name="Harbers M."/>
            <person name="Hayashi Y."/>
            <person name="Hensch T.K."/>
            <person name="Hirokawa N."/>
            <person name="Hill D."/>
            <person name="Huminiecki L."/>
            <person name="Iacono M."/>
            <person name="Ikeo K."/>
            <person name="Iwama A."/>
            <person name="Ishikawa T."/>
            <person name="Jakt M."/>
            <person name="Kanapin A."/>
            <person name="Katoh M."/>
            <person name="Kawasawa Y."/>
            <person name="Kelso J."/>
            <person name="Kitamura H."/>
            <person name="Kitano H."/>
            <person name="Kollias G."/>
            <person name="Krishnan S.P."/>
            <person name="Kruger A."/>
            <person name="Kummerfeld S.K."/>
            <person name="Kurochkin I.V."/>
            <person name="Lareau L.F."/>
            <person name="Lazarevic D."/>
            <person name="Lipovich L."/>
            <person name="Liu J."/>
            <person name="Liuni S."/>
            <person name="McWilliam S."/>
            <person name="Madan Babu M."/>
            <person name="Madera M."/>
            <person name="Marchionni L."/>
            <person name="Matsuda H."/>
            <person name="Matsuzawa S."/>
            <person name="Miki H."/>
            <person name="Mignone F."/>
            <person name="Miyake S."/>
            <person name="Morris K."/>
            <person name="Mottagui-Tabar S."/>
            <person name="Mulder N."/>
            <person name="Nakano N."/>
            <person name="Nakauchi H."/>
            <person name="Ng P."/>
            <person name="Nilsson R."/>
            <person name="Nishiguchi S."/>
            <person name="Nishikawa S."/>
            <person name="Nori F."/>
            <person name="Ohara O."/>
            <person name="Okazaki Y."/>
            <person name="Orlando V."/>
            <person name="Pang K.C."/>
            <person name="Pavan W.J."/>
            <person name="Pavesi G."/>
            <person name="Pesole G."/>
            <person name="Petrovsky N."/>
            <person name="Piazza S."/>
            <person name="Reed J."/>
            <person name="Reid J.F."/>
            <person name="Ring B.Z."/>
            <person name="Ringwald M."/>
            <person name="Rost B."/>
            <person name="Ruan Y."/>
            <person name="Salzberg S.L."/>
            <person name="Sandelin A."/>
            <person name="Schneider C."/>
            <person name="Schoenbach C."/>
            <person name="Sekiguchi K."/>
            <person name="Semple C.A."/>
            <person name="Seno S."/>
            <person name="Sessa L."/>
            <person name="Sheng Y."/>
            <person name="Shibata Y."/>
            <person name="Shimada H."/>
            <person name="Shimada K."/>
            <person name="Silva D."/>
            <person name="Sinclair B."/>
            <person name="Sperling S."/>
            <person name="Stupka E."/>
            <person name="Sugiura K."/>
            <person name="Sultana R."/>
            <person name="Takenaka Y."/>
            <person name="Taki K."/>
            <person name="Tammoja K."/>
            <person name="Tan S.L."/>
            <person name="Tang S."/>
            <person name="Taylor M.S."/>
            <person name="Tegner J."/>
            <person name="Teichmann S.A."/>
            <person name="Ueda H.R."/>
            <person name="van Nimwegen E."/>
            <person name="Verardo R."/>
            <person name="Wei C.L."/>
            <person name="Yagi K."/>
            <person name="Yamanishi H."/>
            <person name="Zabarovsky E."/>
            <person name="Zhu S."/>
            <person name="Zimmer A."/>
            <person name="Hide W."/>
            <person name="Bult C."/>
            <person name="Grimmond S.M."/>
            <person name="Teasdale R.D."/>
            <person name="Liu E.T."/>
            <person name="Brusic V."/>
            <person name="Quackenbush J."/>
            <person name="Wahlestedt C."/>
            <person name="Mattick J.S."/>
            <person name="Hume D.A."/>
            <person name="Kai C."/>
            <person name="Sasaki D."/>
            <person name="Tomaru Y."/>
            <person name="Fukuda S."/>
            <person name="Kanamori-Katayama M."/>
            <person name="Suzuki M."/>
            <person name="Aoki J."/>
            <person name="Arakawa T."/>
            <person name="Iida J."/>
            <person name="Imamura K."/>
            <person name="Itoh M."/>
            <person name="Kato T."/>
            <person name="Kawaji H."/>
            <person name="Kawagashira N."/>
            <person name="Kawashima T."/>
            <person name="Kojima M."/>
            <person name="Kondo S."/>
            <person name="Konno H."/>
            <person name="Nakano K."/>
            <person name="Ninomiya N."/>
            <person name="Nishio T."/>
            <person name="Okada M."/>
            <person name="Plessy C."/>
            <person name="Shibata K."/>
            <person name="Shiraki T."/>
            <person name="Suzuki S."/>
            <person name="Tagami M."/>
            <person name="Waki K."/>
            <person name="Watahiki A."/>
            <person name="Okamura-Oho Y."/>
            <person name="Suzuki H."/>
            <person name="Kawai J."/>
            <person name="Hayashizaki Y."/>
        </authorList>
    </citation>
    <scope>NUCLEOTIDE SEQUENCE [LARGE SCALE MRNA]</scope>
    <source>
        <strain>C57BL/6J</strain>
        <tissue>Head</tissue>
    </source>
</reference>
<reference key="2">
    <citation type="journal article" date="2004" name="Genome Res.">
        <title>The status, quality, and expansion of the NIH full-length cDNA project: the Mammalian Gene Collection (MGC).</title>
        <authorList>
            <consortium name="The MGC Project Team"/>
        </authorList>
    </citation>
    <scope>NUCLEOTIDE SEQUENCE [LARGE SCALE MRNA]</scope>
    <source>
        <tissue>Brain</tissue>
    </source>
</reference>
<feature type="chain" id="PRO_0000207682" description="Uronyl 2-sulfotransferase">
    <location>
        <begin position="1"/>
        <end position="407"/>
    </location>
</feature>
<feature type="topological domain" description="Cytoplasmic" evidence="3">
    <location>
        <begin position="1"/>
        <end position="49"/>
    </location>
</feature>
<feature type="transmembrane region" description="Helical; Signal-anchor for type II membrane protein" evidence="3">
    <location>
        <begin position="50"/>
        <end position="70"/>
    </location>
</feature>
<feature type="topological domain" description="Lumenal" evidence="3">
    <location>
        <begin position="71"/>
        <end position="407"/>
    </location>
</feature>
<feature type="region of interest" description="Disordered" evidence="4">
    <location>
        <begin position="1"/>
        <end position="20"/>
    </location>
</feature>
<feature type="region of interest" description="Disordered" evidence="4">
    <location>
        <begin position="386"/>
        <end position="407"/>
    </location>
</feature>
<feature type="compositionally biased region" description="Acidic residues" evidence="4">
    <location>
        <begin position="386"/>
        <end position="400"/>
    </location>
</feature>
<feature type="active site" evidence="2">
    <location>
        <position position="169"/>
    </location>
</feature>
<feature type="glycosylation site" description="N-linked (GlcNAc...) asparagine" evidence="3">
    <location>
        <position position="85"/>
    </location>
</feature>
<feature type="glycosylation site" description="N-linked (GlcNAc...) asparagine" evidence="3">
    <location>
        <position position="141"/>
    </location>
</feature>
<feature type="glycosylation site" description="N-linked (GlcNAc...) asparagine" evidence="3">
    <location>
        <position position="156"/>
    </location>
</feature>
<feature type="glycosylation site" description="N-linked (GlcNAc...) asparagine" evidence="3">
    <location>
        <position position="174"/>
    </location>
</feature>
<feature type="glycosylation site" description="N-linked (GlcNAc...) asparagine" evidence="3">
    <location>
        <position position="320"/>
    </location>
</feature>
<feature type="sequence conflict" description="In Ref. 1; BAC39625." evidence="5" ref="1">
    <original>L</original>
    <variation>V</variation>
    <location>
        <position position="57"/>
    </location>
</feature>
<evidence type="ECO:0000250" key="1"/>
<evidence type="ECO:0000250" key="2">
    <source>
        <dbReference type="UniProtKB" id="Q9Y2C2"/>
    </source>
</evidence>
<evidence type="ECO:0000255" key="3"/>
<evidence type="ECO:0000256" key="4">
    <source>
        <dbReference type="SAM" id="MobiDB-lite"/>
    </source>
</evidence>
<evidence type="ECO:0000305" key="5"/>
<evidence type="ECO:0000312" key="6">
    <source>
        <dbReference type="MGI" id="MGI:2442406"/>
    </source>
</evidence>
<evidence type="ECO:0000312" key="7">
    <source>
        <dbReference type="Proteomes" id="UP000000589"/>
    </source>
</evidence>
<keyword id="KW-0325">Glycoprotein</keyword>
<keyword id="KW-0333">Golgi apparatus</keyword>
<keyword id="KW-0472">Membrane</keyword>
<keyword id="KW-1185">Reference proteome</keyword>
<keyword id="KW-0735">Signal-anchor</keyword>
<keyword id="KW-0808">Transferase</keyword>
<keyword id="KW-0812">Transmembrane</keyword>
<keyword id="KW-1133">Transmembrane helix</keyword>